<protein>
    <recommendedName>
        <fullName evidence="6">ESX-5 secretion system protein EccC5</fullName>
    </recommendedName>
    <alternativeName>
        <fullName evidence="6">ESX conserved component C5</fullName>
    </alternativeName>
    <alternativeName>
        <fullName evidence="6">Type VII secretion system protein EccC5</fullName>
        <shortName evidence="6">T7SS protein EccC5</shortName>
    </alternativeName>
</protein>
<comment type="function">
    <text evidence="3 4">Part of the ESX-5 specialized secretion system, which is responsible for the secretion of EsxN and a number of PE_PGRS and PPE proteins (PubMed:19602152, PubMed:22925462). This component is essential for ESX-5 complex stability and secretion (PubMed:22925462).</text>
</comment>
<comment type="subunit">
    <text evidence="4">Part of the ESX-5 / type VII secretion system (T7SS), which is composed of cytosolic and membrane components. The ESX-5 membrane complex is composed of EccB5, EccC5, EccD5 and EccE5.</text>
</comment>
<comment type="subcellular location">
    <subcellularLocation>
        <location evidence="4">Cell inner membrane</location>
        <topology evidence="1">Multi-pass membrane protein</topology>
    </subcellularLocation>
</comment>
<comment type="disruption phenotype">
    <text evidence="4">Mutant does not secrete EsxN and PE_PGRS proteins, and has reduced levels of EccB5, EccD5 and EccE5.</text>
</comment>
<dbReference type="EMBL" id="CP000854">
    <property type="protein sequence ID" value="ACC41108.1"/>
    <property type="molecule type" value="Genomic_DNA"/>
</dbReference>
<dbReference type="RefSeq" id="WP_012394382.1">
    <property type="nucleotide sequence ID" value="NC_010612.1"/>
</dbReference>
<dbReference type="SMR" id="B2HST4"/>
<dbReference type="STRING" id="216594.MMAR_2665"/>
<dbReference type="KEGG" id="mmi:MMAR_2665"/>
<dbReference type="eggNOG" id="COG1674">
    <property type="taxonomic scope" value="Bacteria"/>
</dbReference>
<dbReference type="HOGENOM" id="CLU_003134_1_0_11"/>
<dbReference type="OrthoDB" id="9807790at2"/>
<dbReference type="PHI-base" id="PHI:6277"/>
<dbReference type="Proteomes" id="UP000001190">
    <property type="component" value="Chromosome"/>
</dbReference>
<dbReference type="GO" id="GO:0005886">
    <property type="term" value="C:plasma membrane"/>
    <property type="evidence" value="ECO:0007669"/>
    <property type="project" value="UniProtKB-SubCell"/>
</dbReference>
<dbReference type="GO" id="GO:0005524">
    <property type="term" value="F:ATP binding"/>
    <property type="evidence" value="ECO:0007669"/>
    <property type="project" value="UniProtKB-KW"/>
</dbReference>
<dbReference type="GO" id="GO:0016887">
    <property type="term" value="F:ATP hydrolysis activity"/>
    <property type="evidence" value="ECO:0007669"/>
    <property type="project" value="InterPro"/>
</dbReference>
<dbReference type="GO" id="GO:0003677">
    <property type="term" value="F:DNA binding"/>
    <property type="evidence" value="ECO:0007669"/>
    <property type="project" value="InterPro"/>
</dbReference>
<dbReference type="FunFam" id="3.40.50.300:FF:001298">
    <property type="entry name" value="Type VII secretion protein EccC"/>
    <property type="match status" value="1"/>
</dbReference>
<dbReference type="FunFam" id="3.40.50.300:FF:001338">
    <property type="entry name" value="Type VII secretion protein EccC"/>
    <property type="match status" value="1"/>
</dbReference>
<dbReference type="FunFam" id="3.40.50.300:FF:002200">
    <property type="entry name" value="Type VII secretion protein EccC"/>
    <property type="match status" value="1"/>
</dbReference>
<dbReference type="Gene3D" id="3.40.50.300">
    <property type="entry name" value="P-loop containing nucleotide triphosphate hydrolases"/>
    <property type="match status" value="4"/>
</dbReference>
<dbReference type="InterPro" id="IPR003593">
    <property type="entry name" value="AAA+_ATPase"/>
</dbReference>
<dbReference type="InterPro" id="IPR023836">
    <property type="entry name" value="EccCa-like_Actinobacteria"/>
</dbReference>
<dbReference type="InterPro" id="IPR023837">
    <property type="entry name" value="EccCb-like_Actinobacteria"/>
</dbReference>
<dbReference type="InterPro" id="IPR050206">
    <property type="entry name" value="FtsK/SpoIIIE/SftA"/>
</dbReference>
<dbReference type="InterPro" id="IPR002543">
    <property type="entry name" value="FtsK_dom"/>
</dbReference>
<dbReference type="InterPro" id="IPR027417">
    <property type="entry name" value="P-loop_NTPase"/>
</dbReference>
<dbReference type="NCBIfam" id="TIGR03924">
    <property type="entry name" value="T7SS_EccC_a"/>
    <property type="match status" value="1"/>
</dbReference>
<dbReference type="NCBIfam" id="TIGR03925">
    <property type="entry name" value="T7SS_EccC_b"/>
    <property type="match status" value="1"/>
</dbReference>
<dbReference type="PANTHER" id="PTHR22683:SF41">
    <property type="entry name" value="DNA TRANSLOCASE FTSK"/>
    <property type="match status" value="1"/>
</dbReference>
<dbReference type="PANTHER" id="PTHR22683">
    <property type="entry name" value="SPORULATION PROTEIN RELATED"/>
    <property type="match status" value="1"/>
</dbReference>
<dbReference type="Pfam" id="PF01580">
    <property type="entry name" value="FtsK_SpoIIIE"/>
    <property type="match status" value="2"/>
</dbReference>
<dbReference type="SMART" id="SM00382">
    <property type="entry name" value="AAA"/>
    <property type="match status" value="3"/>
</dbReference>
<dbReference type="SUPFAM" id="SSF52540">
    <property type="entry name" value="P-loop containing nucleoside triphosphate hydrolases"/>
    <property type="match status" value="2"/>
</dbReference>
<dbReference type="PROSITE" id="PS50901">
    <property type="entry name" value="FTSK"/>
    <property type="match status" value="3"/>
</dbReference>
<proteinExistence type="evidence at protein level"/>
<gene>
    <name evidence="5" type="primary">eccC5</name>
    <name evidence="7" type="ordered locus">MMAR_2665</name>
</gene>
<sequence length="1388" mass="152570">MKRGFARPTPEKAPVIKPENIVLPTPLSIPPPEGKPWWLIVVGVVVVGLLGGMVAMVFASGSHVFGGVGSIFPIFMMVGIMMMMFRSVGAGGQQQMSRPKLDAMRAQFMLMLDMLRETAQESADSMDSNYRWFHPAPSTLAAAVGSPRMWERKPDGKDLNFGVVRVGVGMTRPEVTWGEPQNMPTDIELEPVTGKALQEFGRYQSVVYNLPKMISLLVEPWYALVGEREQALGLMRAIICQLTFSHGPDHVQFIVVSSDLAEWEWVKWLPHFGDSRRYDAAGNARMVYSSVREFAAEQGELFAGRGSFTPRHASSSAQTPTPHTVIICDVDDPQWEYVISAEGVDGVTFFDLTGSPMWTNVPERKLEFDKTGVIEALPRDRDTWMVIDDNAWFFALTDHVSIAEAEEFGQKLAQWRLAEAYEEIGQRVAHIGARDILAYYGIDDPGNIDFDYLWGSRTDSMGRSRLRAPFGNRSDNGELLFLDMKSLDEGGDGPHGVMSGTTGSGKSTLVRTVIESLMLGHPPEELQFVLADLKGGSAVKPFAGVPHVSRIITDLEEDQALMERFLDALWGEIARRKAICDSAGVDDAKEYNSVRGRMRARGQDMAPLPMLVVVIDEFYEWFRIMPTAVDVLDSIGRQGRAYWIHLMMASQTIESRAEKLMENMGYRLVLKARTAGAAQAAGVPNAVNLPAQAGLGYFRKSLEDIIRFQAEFLWRDYFQPGITVDGEEAPVLVHSIDYIRPQLFTNSFTPLEVTVGGPEIDKVVAHANGEVVEEVEAEAEEEGIRVPKVGTVIIDQLRRINFEPYRLWQPPLTQPVAIDDLVNRFLGHPWQKEYGSARNLVFPIGVIDRPFKHDQPPWTVDTSGPGSNVLILGAGGSGKTTALQTLISSAALTHTPDQVQFYCLAYSSTALTTVSKLPHVGEVAGPTDPYGVRRTVAELLALVRERKRSFLEYGIASMEMFRRRKFGGEAGPVPNDGFGDVYLVIDNYRALAEENEVLIEQVNLIINQGPSFGVHVVVTADRESELRPPVRSGFGSRVELRLAAVEDAKLVRSRFAKDVPVKPGRGMVAVNYVRLDSDPQAGLHTLVARPAMGSTPTNVFECDSVVAAVSRLTTSQAPPVRRLPASFGVDQVRQLAARDTRQGVGVGGIAWAISELDLQPVYLNFAENSHLMVTGRRECGRTTTLATIMSEIGRLYAPGATSVPAPPPGQPSAQVWLIDPRRQLLTALGSNYVERFAYNLDGVQAMMGELAAVLAGREPPPGLSAEELLSRSWWSGPEIFLIVDDIQQLPPGFDSPLHKAAPWVNRAADVGLHVIVTRSFGGWSSAGSDPMLRALHQANAPLLVMDADPDEGFIRGKMKGGPLPRGRGLLMAEDTGVFVQVALTEVRK</sequence>
<evidence type="ECO:0000255" key="1"/>
<evidence type="ECO:0000255" key="2">
    <source>
        <dbReference type="PROSITE-ProRule" id="PRU00289"/>
    </source>
</evidence>
<evidence type="ECO:0000269" key="3">
    <source>
    </source>
</evidence>
<evidence type="ECO:0000269" key="4">
    <source>
    </source>
</evidence>
<evidence type="ECO:0000303" key="5">
    <source>
    </source>
</evidence>
<evidence type="ECO:0000305" key="6"/>
<evidence type="ECO:0000312" key="7">
    <source>
        <dbReference type="EMBL" id="ACC41108.1"/>
    </source>
</evidence>
<reference key="1">
    <citation type="journal article" date="2008" name="Genome Res.">
        <title>Insights from the complete genome sequence of Mycobacterium marinum on the evolution of Mycobacterium tuberculosis.</title>
        <authorList>
            <person name="Stinear T.P."/>
            <person name="Seemann T."/>
            <person name="Harrison P.F."/>
            <person name="Jenkin G.A."/>
            <person name="Davies J.K."/>
            <person name="Johnson P.D."/>
            <person name="Abdellah Z."/>
            <person name="Arrowsmith C."/>
            <person name="Chillingworth T."/>
            <person name="Churcher C."/>
            <person name="Clarke K."/>
            <person name="Cronin A."/>
            <person name="Davis P."/>
            <person name="Goodhead I."/>
            <person name="Holroyd N."/>
            <person name="Jagels K."/>
            <person name="Lord A."/>
            <person name="Moule S."/>
            <person name="Mungall K."/>
            <person name="Norbertczak H."/>
            <person name="Quail M.A."/>
            <person name="Rabbinowitsch E."/>
            <person name="Walker D."/>
            <person name="White B."/>
            <person name="Whitehead S."/>
            <person name="Small P.L."/>
            <person name="Brosch R."/>
            <person name="Ramakrishnan L."/>
            <person name="Fischbach M.A."/>
            <person name="Parkhill J."/>
            <person name="Cole S.T."/>
        </authorList>
    </citation>
    <scope>NUCLEOTIDE SEQUENCE [LARGE SCALE GENOMIC DNA]</scope>
    <source>
        <strain>ATCC BAA-535 / M</strain>
    </source>
</reference>
<reference key="2">
    <citation type="journal article" date="2009" name="Mol. Microbiol.">
        <title>PPE and PE_PGRS proteins of Mycobacterium marinum are transported via the type VII secretion system ESX-5.</title>
        <authorList>
            <person name="Abdallah A.M."/>
            <person name="Verboom T."/>
            <person name="Weerdenburg E.M."/>
            <person name="Gey van Pittius N.C."/>
            <person name="Mahasha P.W."/>
            <person name="Jimenez C."/>
            <person name="Parra M."/>
            <person name="Cadieux N."/>
            <person name="Brennan M.J."/>
            <person name="Appelmelk B.J."/>
            <person name="Bitter W."/>
        </authorList>
    </citation>
    <scope>FUNCTION</scope>
</reference>
<reference key="3">
    <citation type="journal article" date="2012" name="Mol. Microbiol.">
        <title>Composition of the type VII secretion system membrane complex.</title>
        <authorList>
            <person name="Houben E.N."/>
            <person name="Bestebroer J."/>
            <person name="Ummels R."/>
            <person name="Wilson L."/>
            <person name="Piersma S.R."/>
            <person name="Jimenez C.R."/>
            <person name="Ottenhoff T.H."/>
            <person name="Luirink J."/>
            <person name="Bitter W."/>
        </authorList>
    </citation>
    <scope>FUNCTION</scope>
    <scope>SUBUNIT</scope>
    <scope>SUBCELLULAR LOCATION</scope>
    <scope>DISRUPTION PHENOTYPE</scope>
    <source>
        <strain>ATCC BAA-535 / M</strain>
    </source>
</reference>
<name>ECCC5_MYCMM</name>
<feature type="chain" id="PRO_0000434750" description="ESX-5 secretion system protein EccC5">
    <location>
        <begin position="1"/>
        <end position="1388"/>
    </location>
</feature>
<feature type="transmembrane region" description="Helical" evidence="1">
    <location>
        <begin position="38"/>
        <end position="58"/>
    </location>
</feature>
<feature type="transmembrane region" description="Helical" evidence="1">
    <location>
        <begin position="65"/>
        <end position="85"/>
    </location>
</feature>
<feature type="domain" description="FtsK 1" evidence="2">
    <location>
        <begin position="477"/>
        <end position="679"/>
    </location>
</feature>
<feature type="domain" description="FtsK 2" evidence="2">
    <location>
        <begin position="855"/>
        <end position="1049"/>
    </location>
</feature>
<feature type="domain" description="FtsK 3" evidence="2">
    <location>
        <begin position="1158"/>
        <end position="1351"/>
    </location>
</feature>
<feature type="binding site" evidence="2">
    <location>
        <begin position="500"/>
        <end position="507"/>
    </location>
    <ligand>
        <name>ATP</name>
        <dbReference type="ChEBI" id="CHEBI:30616"/>
    </ligand>
</feature>
<feature type="binding site" evidence="2">
    <location>
        <begin position="873"/>
        <end position="880"/>
    </location>
    <ligand>
        <name>ATP</name>
        <dbReference type="ChEBI" id="CHEBI:30616"/>
    </ligand>
</feature>
<feature type="binding site" evidence="2">
    <location>
        <begin position="1175"/>
        <end position="1182"/>
    </location>
    <ligand>
        <name>ATP</name>
        <dbReference type="ChEBI" id="CHEBI:30616"/>
    </ligand>
</feature>
<accession>B2HST4</accession>
<organism>
    <name type="scientific">Mycobacterium marinum (strain ATCC BAA-535 / M)</name>
    <dbReference type="NCBI Taxonomy" id="216594"/>
    <lineage>
        <taxon>Bacteria</taxon>
        <taxon>Bacillati</taxon>
        <taxon>Actinomycetota</taxon>
        <taxon>Actinomycetes</taxon>
        <taxon>Mycobacteriales</taxon>
        <taxon>Mycobacteriaceae</taxon>
        <taxon>Mycobacterium</taxon>
        <taxon>Mycobacterium ulcerans group</taxon>
    </lineage>
</organism>
<keyword id="KW-0067">ATP-binding</keyword>
<keyword id="KW-0997">Cell inner membrane</keyword>
<keyword id="KW-1003">Cell membrane</keyword>
<keyword id="KW-0472">Membrane</keyword>
<keyword id="KW-0547">Nucleotide-binding</keyword>
<keyword id="KW-1185">Reference proteome</keyword>
<keyword id="KW-0677">Repeat</keyword>
<keyword id="KW-0812">Transmembrane</keyword>
<keyword id="KW-1133">Transmembrane helix</keyword>
<keyword id="KW-0813">Transport</keyword>